<gene>
    <name type="primary">rpl5</name>
</gene>
<sequence>MRSQQSLEEIAELYGLLENIKKEYEDGIHSVLRKSNPELFSNPHTIPKLKKISINRGLGLAAQNTNILKKSITEFTRITGQKPLITRAKKAVAGFKIREEMELGLSSTLRGEKMYSFLTKLIFFTFAQIRDFRGLSVRSFDKAGNYTFSLKEQLIFPEIEYDDVDQVQGLSITLVLDSSTPKSRSKTVDRVLNGMILLKFLRFPLNDCGYYDKYESFGEITQVWDKKKHLRRKRWSQE</sequence>
<geneLocation type="chloroplast"/>
<dbReference type="EMBL" id="EF067921">
    <property type="protein sequence ID" value="ABK20820.1"/>
    <property type="molecule type" value="Genomic_DNA"/>
</dbReference>
<dbReference type="RefSeq" id="YP_874597.1">
    <property type="nucleotide sequence ID" value="NC_008589.1"/>
</dbReference>
<dbReference type="SMR" id="A0T0Y5"/>
<dbReference type="STRING" id="35128.A0T0Y5"/>
<dbReference type="GeneID" id="4524760"/>
<dbReference type="InParanoid" id="A0T0Y5"/>
<dbReference type="GO" id="GO:0009507">
    <property type="term" value="C:chloroplast"/>
    <property type="evidence" value="ECO:0007669"/>
    <property type="project" value="UniProtKB-SubCell"/>
</dbReference>
<dbReference type="GO" id="GO:0022625">
    <property type="term" value="C:cytosolic large ribosomal subunit"/>
    <property type="evidence" value="ECO:0000318"/>
    <property type="project" value="GO_Central"/>
</dbReference>
<dbReference type="GO" id="GO:0003723">
    <property type="term" value="F:RNA binding"/>
    <property type="evidence" value="ECO:0000318"/>
    <property type="project" value="GO_Central"/>
</dbReference>
<dbReference type="GO" id="GO:0019843">
    <property type="term" value="F:rRNA binding"/>
    <property type="evidence" value="ECO:0007669"/>
    <property type="project" value="UniProtKB-UniRule"/>
</dbReference>
<dbReference type="GO" id="GO:0003735">
    <property type="term" value="F:structural constituent of ribosome"/>
    <property type="evidence" value="ECO:0000318"/>
    <property type="project" value="GO_Central"/>
</dbReference>
<dbReference type="GO" id="GO:0006412">
    <property type="term" value="P:translation"/>
    <property type="evidence" value="ECO:0000318"/>
    <property type="project" value="GO_Central"/>
</dbReference>
<dbReference type="FunFam" id="3.30.1440.10:FF:000001">
    <property type="entry name" value="50S ribosomal protein L5"/>
    <property type="match status" value="1"/>
</dbReference>
<dbReference type="Gene3D" id="3.30.1440.10">
    <property type="match status" value="1"/>
</dbReference>
<dbReference type="HAMAP" id="MF_01333_B">
    <property type="entry name" value="Ribosomal_uL5_B"/>
    <property type="match status" value="1"/>
</dbReference>
<dbReference type="InterPro" id="IPR002132">
    <property type="entry name" value="Ribosomal_uL5"/>
</dbReference>
<dbReference type="InterPro" id="IPR020930">
    <property type="entry name" value="Ribosomal_uL5_bac-type"/>
</dbReference>
<dbReference type="InterPro" id="IPR031309">
    <property type="entry name" value="Ribosomal_uL5_C"/>
</dbReference>
<dbReference type="InterPro" id="IPR022803">
    <property type="entry name" value="Ribosomal_uL5_dom_sf"/>
</dbReference>
<dbReference type="InterPro" id="IPR031310">
    <property type="entry name" value="Ribosomal_uL5_N"/>
</dbReference>
<dbReference type="NCBIfam" id="NF000585">
    <property type="entry name" value="PRK00010.1"/>
    <property type="match status" value="1"/>
</dbReference>
<dbReference type="PANTHER" id="PTHR11994">
    <property type="entry name" value="60S RIBOSOMAL PROTEIN L11-RELATED"/>
    <property type="match status" value="1"/>
</dbReference>
<dbReference type="Pfam" id="PF00281">
    <property type="entry name" value="Ribosomal_L5"/>
    <property type="match status" value="1"/>
</dbReference>
<dbReference type="Pfam" id="PF00673">
    <property type="entry name" value="Ribosomal_L5_C"/>
    <property type="match status" value="1"/>
</dbReference>
<dbReference type="SUPFAM" id="SSF55282">
    <property type="entry name" value="RL5-like"/>
    <property type="match status" value="1"/>
</dbReference>
<comment type="function">
    <text evidence="1">Binds 5S rRNA, forms part of the central protuberance of the 50S subunit.</text>
</comment>
<comment type="subunit">
    <text evidence="1">Part of the 50S ribosomal subunit; contacts the 5S rRNA.</text>
</comment>
<comment type="subcellular location">
    <subcellularLocation>
        <location>Plastid</location>
        <location>Chloroplast</location>
    </subcellularLocation>
</comment>
<comment type="similarity">
    <text evidence="2">Belongs to the universal ribosomal protein uL5 family.</text>
</comment>
<feature type="chain" id="PRO_0000365655" description="Large ribosomal subunit protein uL5c">
    <location>
        <begin position="1"/>
        <end position="238"/>
    </location>
</feature>
<evidence type="ECO:0000250" key="1"/>
<evidence type="ECO:0000305" key="2"/>
<name>RK5_THAPS</name>
<reference key="1">
    <citation type="journal article" date="2007" name="Mol. Genet. Genomics">
        <title>Chloroplast genomes of the diatoms Phaeodactylum tricornutum and Thalassiosira pseudonana: comparison with other plastid genomes of the red lineage.</title>
        <authorList>
            <person name="Oudot-Le Secq M.-P."/>
            <person name="Grimwood J."/>
            <person name="Shapiro H."/>
            <person name="Armbrust E.V."/>
            <person name="Bowler C."/>
            <person name="Green B.R."/>
        </authorList>
    </citation>
    <scope>NUCLEOTIDE SEQUENCE [LARGE SCALE GENOMIC DNA]</scope>
    <source>
        <strain>CCMP1335 / NEPCC58 / CCAP 1085/12</strain>
    </source>
</reference>
<organism>
    <name type="scientific">Thalassiosira pseudonana</name>
    <name type="common">Marine diatom</name>
    <name type="synonym">Cyclotella nana</name>
    <dbReference type="NCBI Taxonomy" id="35128"/>
    <lineage>
        <taxon>Eukaryota</taxon>
        <taxon>Sar</taxon>
        <taxon>Stramenopiles</taxon>
        <taxon>Ochrophyta</taxon>
        <taxon>Bacillariophyta</taxon>
        <taxon>Coscinodiscophyceae</taxon>
        <taxon>Thalassiosirophycidae</taxon>
        <taxon>Thalassiosirales</taxon>
        <taxon>Thalassiosiraceae</taxon>
        <taxon>Thalassiosira</taxon>
    </lineage>
</organism>
<keyword id="KW-0150">Chloroplast</keyword>
<keyword id="KW-0934">Plastid</keyword>
<keyword id="KW-0687">Ribonucleoprotein</keyword>
<keyword id="KW-0689">Ribosomal protein</keyword>
<keyword id="KW-0694">RNA-binding</keyword>
<keyword id="KW-0699">rRNA-binding</keyword>
<proteinExistence type="inferred from homology"/>
<accession>A0T0Y5</accession>
<protein>
    <recommendedName>
        <fullName evidence="2">Large ribosomal subunit protein uL5c</fullName>
    </recommendedName>
    <alternativeName>
        <fullName>50S ribosomal protein L5, chloroplastic</fullName>
    </alternativeName>
</protein>